<proteinExistence type="inferred from homology"/>
<evidence type="ECO:0000250" key="1"/>
<evidence type="ECO:0000255" key="2">
    <source>
        <dbReference type="PROSITE-ProRule" id="PRU00541"/>
    </source>
</evidence>
<evidence type="ECO:0000255" key="3">
    <source>
        <dbReference type="PROSITE-ProRule" id="PRU00542"/>
    </source>
</evidence>
<evidence type="ECO:0000256" key="4">
    <source>
        <dbReference type="SAM" id="MobiDB-lite"/>
    </source>
</evidence>
<evidence type="ECO:0000305" key="5"/>
<reference key="1">
    <citation type="submission" date="2005-09" db="EMBL/GenBank/DDBJ databases">
        <title>Annotation of the Aspergillus terreus NIH2624 genome.</title>
        <authorList>
            <person name="Birren B.W."/>
            <person name="Lander E.S."/>
            <person name="Galagan J.E."/>
            <person name="Nusbaum C."/>
            <person name="Devon K."/>
            <person name="Henn M."/>
            <person name="Ma L.-J."/>
            <person name="Jaffe D.B."/>
            <person name="Butler J."/>
            <person name="Alvarez P."/>
            <person name="Gnerre S."/>
            <person name="Grabherr M."/>
            <person name="Kleber M."/>
            <person name="Mauceli E.W."/>
            <person name="Brockman W."/>
            <person name="Rounsley S."/>
            <person name="Young S.K."/>
            <person name="LaButti K."/>
            <person name="Pushparaj V."/>
            <person name="DeCaprio D."/>
            <person name="Crawford M."/>
            <person name="Koehrsen M."/>
            <person name="Engels R."/>
            <person name="Montgomery P."/>
            <person name="Pearson M."/>
            <person name="Howarth C."/>
            <person name="Larson L."/>
            <person name="Luoma S."/>
            <person name="White J."/>
            <person name="Alvarado L."/>
            <person name="Kodira C.D."/>
            <person name="Zeng Q."/>
            <person name="Oleary S."/>
            <person name="Yandava C."/>
            <person name="Denning D.W."/>
            <person name="Nierman W.C."/>
            <person name="Milne T."/>
            <person name="Madden K."/>
        </authorList>
    </citation>
    <scope>NUCLEOTIDE SEQUENCE [LARGE SCALE GENOMIC DNA]</scope>
    <source>
        <strain>NIH 2624 / FGSC A1156</strain>
    </source>
</reference>
<protein>
    <recommendedName>
        <fullName>ATP-dependent RNA helicase sub2</fullName>
        <ecNumber>3.6.4.13</ecNumber>
    </recommendedName>
</protein>
<dbReference type="EC" id="3.6.4.13"/>
<dbReference type="EMBL" id="CH476603">
    <property type="protein sequence ID" value="EAU32577.1"/>
    <property type="molecule type" value="Genomic_DNA"/>
</dbReference>
<dbReference type="RefSeq" id="XP_001209879.1">
    <property type="nucleotide sequence ID" value="XM_001209879.1"/>
</dbReference>
<dbReference type="SMR" id="Q0CGJ9"/>
<dbReference type="STRING" id="341663.Q0CGJ9"/>
<dbReference type="EnsemblFungi" id="EAU32577">
    <property type="protein sequence ID" value="EAU32577"/>
    <property type="gene ID" value="ATEG_07193"/>
</dbReference>
<dbReference type="GeneID" id="4318888"/>
<dbReference type="VEuPathDB" id="FungiDB:ATEG_07193"/>
<dbReference type="eggNOG" id="KOG0329">
    <property type="taxonomic scope" value="Eukaryota"/>
</dbReference>
<dbReference type="HOGENOM" id="CLU_003041_1_0_1"/>
<dbReference type="OMA" id="YAHVEPK"/>
<dbReference type="OrthoDB" id="10265785at2759"/>
<dbReference type="Proteomes" id="UP000007963">
    <property type="component" value="Unassembled WGS sequence"/>
</dbReference>
<dbReference type="GO" id="GO:0005681">
    <property type="term" value="C:spliceosomal complex"/>
    <property type="evidence" value="ECO:0007669"/>
    <property type="project" value="UniProtKB-KW"/>
</dbReference>
<dbReference type="GO" id="GO:0005524">
    <property type="term" value="F:ATP binding"/>
    <property type="evidence" value="ECO:0007669"/>
    <property type="project" value="UniProtKB-KW"/>
</dbReference>
<dbReference type="GO" id="GO:0016887">
    <property type="term" value="F:ATP hydrolysis activity"/>
    <property type="evidence" value="ECO:0007669"/>
    <property type="project" value="RHEA"/>
</dbReference>
<dbReference type="GO" id="GO:0003723">
    <property type="term" value="F:RNA binding"/>
    <property type="evidence" value="ECO:0007669"/>
    <property type="project" value="UniProtKB-KW"/>
</dbReference>
<dbReference type="GO" id="GO:0003724">
    <property type="term" value="F:RNA helicase activity"/>
    <property type="evidence" value="ECO:0007669"/>
    <property type="project" value="UniProtKB-EC"/>
</dbReference>
<dbReference type="GO" id="GO:0006397">
    <property type="term" value="P:mRNA processing"/>
    <property type="evidence" value="ECO:0007669"/>
    <property type="project" value="UniProtKB-KW"/>
</dbReference>
<dbReference type="GO" id="GO:0051028">
    <property type="term" value="P:mRNA transport"/>
    <property type="evidence" value="ECO:0007669"/>
    <property type="project" value="UniProtKB-KW"/>
</dbReference>
<dbReference type="GO" id="GO:0008380">
    <property type="term" value="P:RNA splicing"/>
    <property type="evidence" value="ECO:0007669"/>
    <property type="project" value="UniProtKB-KW"/>
</dbReference>
<dbReference type="CDD" id="cd17950">
    <property type="entry name" value="DEADc_DDX39"/>
    <property type="match status" value="1"/>
</dbReference>
<dbReference type="CDD" id="cd18787">
    <property type="entry name" value="SF2_C_DEAD"/>
    <property type="match status" value="1"/>
</dbReference>
<dbReference type="FunFam" id="3.40.50.300:FF:000111">
    <property type="entry name" value="DEAD-box ATP-dependent RNA helicase"/>
    <property type="match status" value="1"/>
</dbReference>
<dbReference type="FunFam" id="3.40.50.300:FF:000168">
    <property type="entry name" value="DEAD-box ATP-dependent RNA helicase 56-like"/>
    <property type="match status" value="1"/>
</dbReference>
<dbReference type="Gene3D" id="3.40.50.300">
    <property type="entry name" value="P-loop containing nucleotide triphosphate hydrolases"/>
    <property type="match status" value="2"/>
</dbReference>
<dbReference type="InterPro" id="IPR011545">
    <property type="entry name" value="DEAD/DEAH_box_helicase_dom"/>
</dbReference>
<dbReference type="InterPro" id="IPR014001">
    <property type="entry name" value="Helicase_ATP-bd"/>
</dbReference>
<dbReference type="InterPro" id="IPR001650">
    <property type="entry name" value="Helicase_C-like"/>
</dbReference>
<dbReference type="InterPro" id="IPR027417">
    <property type="entry name" value="P-loop_NTPase"/>
</dbReference>
<dbReference type="PANTHER" id="PTHR47958">
    <property type="entry name" value="ATP-DEPENDENT RNA HELICASE DBP3"/>
    <property type="match status" value="1"/>
</dbReference>
<dbReference type="Pfam" id="PF00270">
    <property type="entry name" value="DEAD"/>
    <property type="match status" value="1"/>
</dbReference>
<dbReference type="Pfam" id="PF00271">
    <property type="entry name" value="Helicase_C"/>
    <property type="match status" value="1"/>
</dbReference>
<dbReference type="SMART" id="SM00487">
    <property type="entry name" value="DEXDc"/>
    <property type="match status" value="1"/>
</dbReference>
<dbReference type="SMART" id="SM00490">
    <property type="entry name" value="HELICc"/>
    <property type="match status" value="1"/>
</dbReference>
<dbReference type="SUPFAM" id="SSF52540">
    <property type="entry name" value="P-loop containing nucleoside triphosphate hydrolases"/>
    <property type="match status" value="1"/>
</dbReference>
<dbReference type="PROSITE" id="PS51192">
    <property type="entry name" value="HELICASE_ATP_BIND_1"/>
    <property type="match status" value="1"/>
</dbReference>
<dbReference type="PROSITE" id="PS51194">
    <property type="entry name" value="HELICASE_CTER"/>
    <property type="match status" value="1"/>
</dbReference>
<dbReference type="PROSITE" id="PS51195">
    <property type="entry name" value="Q_MOTIF"/>
    <property type="match status" value="1"/>
</dbReference>
<sequence>MSHEEDLIDYSDEELQTTDAAATTAAPAANGAPAKTGDLTVTGGRSDKKGSYVGIHSTGFRDFLLKGELLRAITDCGFEHPSEVCIPTAILNVDVLCQAKSGLGKTAVFVLTTLHQLEPVPGECSVLVMCHTRELAYQIKNEYARFSKYLPDVKTAVFYGGTPIQKDIEVLSNKESYPNIVVGTPGRLNALVREKKLSLRNVKAFVLDECDKMLDQIDMRRDVQEIFRATPADKQVMMFSATLSQEIRPICKKFMRNPLEVYVDDDTKLTLHGLQQYYIKLSESEKNRKLNDLLDNLEFNQVIIFVKSTQRANELDKLLRECNFPSIAVHSGVSQEERIKRYKEFKEFNKRICVATDVFGRGIDIERINLAINYDLPADADSYLHRVGRAGRFGTKGLSISFVSSEDDEKVLKDIEKRFEVALPEYPEGGVDSSTYMA</sequence>
<keyword id="KW-0067">ATP-binding</keyword>
<keyword id="KW-0347">Helicase</keyword>
<keyword id="KW-0378">Hydrolase</keyword>
<keyword id="KW-0507">mRNA processing</keyword>
<keyword id="KW-0508">mRNA splicing</keyword>
<keyword id="KW-0509">mRNA transport</keyword>
<keyword id="KW-0547">Nucleotide-binding</keyword>
<keyword id="KW-0539">Nucleus</keyword>
<keyword id="KW-1185">Reference proteome</keyword>
<keyword id="KW-0694">RNA-binding</keyword>
<keyword id="KW-0747">Spliceosome</keyword>
<keyword id="KW-0813">Transport</keyword>
<feature type="chain" id="PRO_0000282688" description="ATP-dependent RNA helicase sub2">
    <location>
        <begin position="1"/>
        <end position="438"/>
    </location>
</feature>
<feature type="domain" description="Helicase ATP-binding" evidence="2">
    <location>
        <begin position="86"/>
        <end position="261"/>
    </location>
</feature>
<feature type="domain" description="Helicase C-terminal" evidence="3">
    <location>
        <begin position="289"/>
        <end position="434"/>
    </location>
</feature>
<feature type="region of interest" description="Disordered" evidence="4">
    <location>
        <begin position="23"/>
        <end position="42"/>
    </location>
</feature>
<feature type="short sequence motif" description="Q motif">
    <location>
        <begin position="58"/>
        <end position="86"/>
    </location>
</feature>
<feature type="short sequence motif" description="DEAD box">
    <location>
        <begin position="208"/>
        <end position="211"/>
    </location>
</feature>
<feature type="compositionally biased region" description="Low complexity" evidence="4">
    <location>
        <begin position="23"/>
        <end position="36"/>
    </location>
</feature>
<feature type="binding site" evidence="2">
    <location>
        <begin position="99"/>
        <end position="106"/>
    </location>
    <ligand>
        <name>ATP</name>
        <dbReference type="ChEBI" id="CHEBI:30616"/>
    </ligand>
</feature>
<gene>
    <name type="primary">sub2</name>
    <name type="ORF">ATEG_07193</name>
</gene>
<name>SUB2_ASPTN</name>
<organism>
    <name type="scientific">Aspergillus terreus (strain NIH 2624 / FGSC A1156)</name>
    <dbReference type="NCBI Taxonomy" id="341663"/>
    <lineage>
        <taxon>Eukaryota</taxon>
        <taxon>Fungi</taxon>
        <taxon>Dikarya</taxon>
        <taxon>Ascomycota</taxon>
        <taxon>Pezizomycotina</taxon>
        <taxon>Eurotiomycetes</taxon>
        <taxon>Eurotiomycetidae</taxon>
        <taxon>Eurotiales</taxon>
        <taxon>Aspergillaceae</taxon>
        <taxon>Aspergillus</taxon>
        <taxon>Aspergillus subgen. Circumdati</taxon>
    </lineage>
</organism>
<accession>Q0CGJ9</accession>
<comment type="function">
    <text evidence="1">ATP-binding RNA helicase involved in transcription elongation and required for the export of mRNA out of the nucleus. SUB2 also plays a role in pre-mRNA splicing and spliceosome assembly. May be involved in rDNA and telomeric silencing, and maintenance of genome integrity (By similarity).</text>
</comment>
<comment type="catalytic activity">
    <reaction>
        <text>ATP + H2O = ADP + phosphate + H(+)</text>
        <dbReference type="Rhea" id="RHEA:13065"/>
        <dbReference type="ChEBI" id="CHEBI:15377"/>
        <dbReference type="ChEBI" id="CHEBI:15378"/>
        <dbReference type="ChEBI" id="CHEBI:30616"/>
        <dbReference type="ChEBI" id="CHEBI:43474"/>
        <dbReference type="ChEBI" id="CHEBI:456216"/>
        <dbReference type="EC" id="3.6.4.13"/>
    </reaction>
</comment>
<comment type="subcellular location">
    <subcellularLocation>
        <location evidence="1">Nucleus</location>
    </subcellularLocation>
</comment>
<comment type="domain">
    <text>The Q motif is unique to and characteristic of the DEAD box family of RNA helicases and controls ATP binding and hydrolysis.</text>
</comment>
<comment type="similarity">
    <text evidence="5">Belongs to the DEAD box helicase family. DECD subfamily.</text>
</comment>